<proteinExistence type="inferred from homology"/>
<evidence type="ECO:0000255" key="1">
    <source>
        <dbReference type="HAMAP-Rule" id="MF_01677"/>
    </source>
</evidence>
<sequence length="205" mass="23109">MSDPRLSLVAAARKFYQLGWMLGTAGNLSAKVDDHSFWITASGKSKGKLTEQDFVRVELTGKVRELAHRDNRPSAETSIHQVIYCLFPQAQACYHVHSVEANLVSRFARGDKLSLPPLEMLKGLGIWVENPQVFMPVFANYLDVPKIAAEIESRFSTFPPEIPALLISYHGVTVWGESLETTENYLEIVEYIFRYLVAAYQVKPC</sequence>
<protein>
    <recommendedName>
        <fullName evidence="1">Methylthioribulose-1-phosphate dehydratase</fullName>
        <shortName evidence="1">MTRu-1-P dehydratase</shortName>
        <ecNumber evidence="1">4.2.1.109</ecNumber>
    </recommendedName>
</protein>
<name>MTNB_MICAN</name>
<accession>B0JVQ9</accession>
<keyword id="KW-0028">Amino-acid biosynthesis</keyword>
<keyword id="KW-0456">Lyase</keyword>
<keyword id="KW-0479">Metal-binding</keyword>
<keyword id="KW-0486">Methionine biosynthesis</keyword>
<keyword id="KW-0862">Zinc</keyword>
<dbReference type="EC" id="4.2.1.109" evidence="1"/>
<dbReference type="EMBL" id="AP009552">
    <property type="protein sequence ID" value="BAG04652.1"/>
    <property type="molecule type" value="Genomic_DNA"/>
</dbReference>
<dbReference type="RefSeq" id="WP_004162472.1">
    <property type="nucleotide sequence ID" value="NC_010296.1"/>
</dbReference>
<dbReference type="SMR" id="B0JVQ9"/>
<dbReference type="STRING" id="449447.MAE_48300"/>
<dbReference type="PaxDb" id="449447-MAE_48300"/>
<dbReference type="EnsemblBacteria" id="BAG04652">
    <property type="protein sequence ID" value="BAG04652"/>
    <property type="gene ID" value="MAE_48300"/>
</dbReference>
<dbReference type="KEGG" id="mar:MAE_48300"/>
<dbReference type="eggNOG" id="COG0235">
    <property type="taxonomic scope" value="Bacteria"/>
</dbReference>
<dbReference type="HOGENOM" id="CLU_006033_4_1_3"/>
<dbReference type="BioCyc" id="MAER449447:MAE_RS20985-MONOMER"/>
<dbReference type="UniPathway" id="UPA00904">
    <property type="reaction ID" value="UER00875"/>
</dbReference>
<dbReference type="Proteomes" id="UP000001510">
    <property type="component" value="Chromosome"/>
</dbReference>
<dbReference type="GO" id="GO:0005737">
    <property type="term" value="C:cytoplasm"/>
    <property type="evidence" value="ECO:0007669"/>
    <property type="project" value="InterPro"/>
</dbReference>
<dbReference type="GO" id="GO:0046570">
    <property type="term" value="F:methylthioribulose 1-phosphate dehydratase activity"/>
    <property type="evidence" value="ECO:0007669"/>
    <property type="project" value="UniProtKB-UniRule"/>
</dbReference>
<dbReference type="GO" id="GO:0008270">
    <property type="term" value="F:zinc ion binding"/>
    <property type="evidence" value="ECO:0007669"/>
    <property type="project" value="UniProtKB-UniRule"/>
</dbReference>
<dbReference type="GO" id="GO:0019509">
    <property type="term" value="P:L-methionine salvage from methylthioadenosine"/>
    <property type="evidence" value="ECO:0007669"/>
    <property type="project" value="UniProtKB-UniRule"/>
</dbReference>
<dbReference type="Gene3D" id="3.40.225.10">
    <property type="entry name" value="Class II aldolase/adducin N-terminal domain"/>
    <property type="match status" value="1"/>
</dbReference>
<dbReference type="HAMAP" id="MF_01677">
    <property type="entry name" value="Salvage_MtnB"/>
    <property type="match status" value="1"/>
</dbReference>
<dbReference type="InterPro" id="IPR001303">
    <property type="entry name" value="Aldolase_II/adducin_N"/>
</dbReference>
<dbReference type="InterPro" id="IPR036409">
    <property type="entry name" value="Aldolase_II/adducin_N_sf"/>
</dbReference>
<dbReference type="InterPro" id="IPR017714">
    <property type="entry name" value="MethylthioRu-1-P_deHdtase_MtnB"/>
</dbReference>
<dbReference type="NCBIfam" id="TIGR03328">
    <property type="entry name" value="salvage_mtnB"/>
    <property type="match status" value="1"/>
</dbReference>
<dbReference type="PANTHER" id="PTHR10640">
    <property type="entry name" value="METHYLTHIORIBULOSE-1-PHOSPHATE DEHYDRATASE"/>
    <property type="match status" value="1"/>
</dbReference>
<dbReference type="PANTHER" id="PTHR10640:SF7">
    <property type="entry name" value="METHYLTHIORIBULOSE-1-PHOSPHATE DEHYDRATASE"/>
    <property type="match status" value="1"/>
</dbReference>
<dbReference type="Pfam" id="PF00596">
    <property type="entry name" value="Aldolase_II"/>
    <property type="match status" value="1"/>
</dbReference>
<dbReference type="SMART" id="SM01007">
    <property type="entry name" value="Aldolase_II"/>
    <property type="match status" value="1"/>
</dbReference>
<dbReference type="SUPFAM" id="SSF53639">
    <property type="entry name" value="AraD/HMP-PK domain-like"/>
    <property type="match status" value="1"/>
</dbReference>
<feature type="chain" id="PRO_0000357094" description="Methylthioribulose-1-phosphate dehydratase">
    <location>
        <begin position="1"/>
        <end position="205"/>
    </location>
</feature>
<feature type="binding site" evidence="1">
    <location>
        <position position="95"/>
    </location>
    <ligand>
        <name>Zn(2+)</name>
        <dbReference type="ChEBI" id="CHEBI:29105"/>
    </ligand>
</feature>
<feature type="binding site" evidence="1">
    <location>
        <position position="97"/>
    </location>
    <ligand>
        <name>Zn(2+)</name>
        <dbReference type="ChEBI" id="CHEBI:29105"/>
    </ligand>
</feature>
<comment type="function">
    <text evidence="1">Catalyzes the dehydration of methylthioribulose-1-phosphate (MTRu-1-P) into 2,3-diketo-5-methylthiopentyl-1-phosphate (DK-MTP-1-P).</text>
</comment>
<comment type="catalytic activity">
    <reaction evidence="1">
        <text>5-(methylsulfanyl)-D-ribulose 1-phosphate = 5-methylsulfanyl-2,3-dioxopentyl phosphate + H2O</text>
        <dbReference type="Rhea" id="RHEA:15549"/>
        <dbReference type="ChEBI" id="CHEBI:15377"/>
        <dbReference type="ChEBI" id="CHEBI:58548"/>
        <dbReference type="ChEBI" id="CHEBI:58828"/>
        <dbReference type="EC" id="4.2.1.109"/>
    </reaction>
</comment>
<comment type="cofactor">
    <cofactor evidence="1">
        <name>Zn(2+)</name>
        <dbReference type="ChEBI" id="CHEBI:29105"/>
    </cofactor>
    <text evidence="1">Binds 1 zinc ion per subunit.</text>
</comment>
<comment type="pathway">
    <text evidence="1">Amino-acid biosynthesis; L-methionine biosynthesis via salvage pathway; L-methionine from S-methyl-5-thio-alpha-D-ribose 1-phosphate: step 2/6.</text>
</comment>
<comment type="similarity">
    <text evidence="1">Belongs to the aldolase class II family. MtnB subfamily.</text>
</comment>
<organism>
    <name type="scientific">Microcystis aeruginosa (strain NIES-843 / IAM M-2473)</name>
    <dbReference type="NCBI Taxonomy" id="449447"/>
    <lineage>
        <taxon>Bacteria</taxon>
        <taxon>Bacillati</taxon>
        <taxon>Cyanobacteriota</taxon>
        <taxon>Cyanophyceae</taxon>
        <taxon>Oscillatoriophycideae</taxon>
        <taxon>Chroococcales</taxon>
        <taxon>Microcystaceae</taxon>
        <taxon>Microcystis</taxon>
    </lineage>
</organism>
<gene>
    <name evidence="1" type="primary">mtnB</name>
    <name type="ordered locus">MAE_48300</name>
</gene>
<reference key="1">
    <citation type="journal article" date="2007" name="DNA Res.">
        <title>Complete genomic structure of the bloom-forming toxic cyanobacterium Microcystis aeruginosa NIES-843.</title>
        <authorList>
            <person name="Kaneko T."/>
            <person name="Nakajima N."/>
            <person name="Okamoto S."/>
            <person name="Suzuki I."/>
            <person name="Tanabe Y."/>
            <person name="Tamaoki M."/>
            <person name="Nakamura Y."/>
            <person name="Kasai F."/>
            <person name="Watanabe A."/>
            <person name="Kawashima K."/>
            <person name="Kishida Y."/>
            <person name="Ono A."/>
            <person name="Shimizu Y."/>
            <person name="Takahashi C."/>
            <person name="Minami C."/>
            <person name="Fujishiro T."/>
            <person name="Kohara M."/>
            <person name="Katoh M."/>
            <person name="Nakazaki N."/>
            <person name="Nakayama S."/>
            <person name="Yamada M."/>
            <person name="Tabata S."/>
            <person name="Watanabe M.M."/>
        </authorList>
    </citation>
    <scope>NUCLEOTIDE SEQUENCE [LARGE SCALE GENOMIC DNA]</scope>
    <source>
        <strain>NIES-843 / IAM M-247</strain>
    </source>
</reference>